<protein>
    <recommendedName>
        <fullName>Putative clathrin assembly protein At4g02650</fullName>
    </recommendedName>
</protein>
<evidence type="ECO:0000250" key="1"/>
<evidence type="ECO:0000255" key="2">
    <source>
        <dbReference type="PROSITE-ProRule" id="PRU00243"/>
    </source>
</evidence>
<evidence type="ECO:0000256" key="3">
    <source>
        <dbReference type="SAM" id="MobiDB-lite"/>
    </source>
</evidence>
<evidence type="ECO:0000305" key="4"/>
<feature type="chain" id="PRO_0000187069" description="Putative clathrin assembly protein At4g02650">
    <location>
        <begin position="1"/>
        <end position="611"/>
    </location>
</feature>
<feature type="domain" description="ENTH" evidence="2">
    <location>
        <begin position="26"/>
        <end position="162"/>
    </location>
</feature>
<feature type="region of interest" description="Disordered" evidence="3">
    <location>
        <begin position="158"/>
        <end position="184"/>
    </location>
</feature>
<feature type="region of interest" description="Disordered" evidence="3">
    <location>
        <begin position="337"/>
        <end position="406"/>
    </location>
</feature>
<feature type="compositionally biased region" description="Basic and acidic residues" evidence="3">
    <location>
        <begin position="386"/>
        <end position="401"/>
    </location>
</feature>
<feature type="sequence conflict" description="In Ref. 3; BAC43049." evidence="4" ref="3">
    <original>E</original>
    <variation>G</variation>
    <location>
        <position position="443"/>
    </location>
</feature>
<reference key="1">
    <citation type="journal article" date="1999" name="Nature">
        <title>Sequence and analysis of chromosome 4 of the plant Arabidopsis thaliana.</title>
        <authorList>
            <person name="Mayer K.F.X."/>
            <person name="Schueller C."/>
            <person name="Wambutt R."/>
            <person name="Murphy G."/>
            <person name="Volckaert G."/>
            <person name="Pohl T."/>
            <person name="Duesterhoeft A."/>
            <person name="Stiekema W."/>
            <person name="Entian K.-D."/>
            <person name="Terryn N."/>
            <person name="Harris B."/>
            <person name="Ansorge W."/>
            <person name="Brandt P."/>
            <person name="Grivell L.A."/>
            <person name="Rieger M."/>
            <person name="Weichselgartner M."/>
            <person name="de Simone V."/>
            <person name="Obermaier B."/>
            <person name="Mache R."/>
            <person name="Mueller M."/>
            <person name="Kreis M."/>
            <person name="Delseny M."/>
            <person name="Puigdomenech P."/>
            <person name="Watson M."/>
            <person name="Schmidtheini T."/>
            <person name="Reichert B."/>
            <person name="Portetelle D."/>
            <person name="Perez-Alonso M."/>
            <person name="Boutry M."/>
            <person name="Bancroft I."/>
            <person name="Vos P."/>
            <person name="Hoheisel J."/>
            <person name="Zimmermann W."/>
            <person name="Wedler H."/>
            <person name="Ridley P."/>
            <person name="Langham S.-A."/>
            <person name="McCullagh B."/>
            <person name="Bilham L."/>
            <person name="Robben J."/>
            <person name="van der Schueren J."/>
            <person name="Grymonprez B."/>
            <person name="Chuang Y.-J."/>
            <person name="Vandenbussche F."/>
            <person name="Braeken M."/>
            <person name="Weltjens I."/>
            <person name="Voet M."/>
            <person name="Bastiaens I."/>
            <person name="Aert R."/>
            <person name="Defoor E."/>
            <person name="Weitzenegger T."/>
            <person name="Bothe G."/>
            <person name="Ramsperger U."/>
            <person name="Hilbert H."/>
            <person name="Braun M."/>
            <person name="Holzer E."/>
            <person name="Brandt A."/>
            <person name="Peters S."/>
            <person name="van Staveren M."/>
            <person name="Dirkse W."/>
            <person name="Mooijman P."/>
            <person name="Klein Lankhorst R."/>
            <person name="Rose M."/>
            <person name="Hauf J."/>
            <person name="Koetter P."/>
            <person name="Berneiser S."/>
            <person name="Hempel S."/>
            <person name="Feldpausch M."/>
            <person name="Lamberth S."/>
            <person name="Van den Daele H."/>
            <person name="De Keyser A."/>
            <person name="Buysshaert C."/>
            <person name="Gielen J."/>
            <person name="Villarroel R."/>
            <person name="De Clercq R."/>
            <person name="van Montagu M."/>
            <person name="Rogers J."/>
            <person name="Cronin A."/>
            <person name="Quail M.A."/>
            <person name="Bray-Allen S."/>
            <person name="Clark L."/>
            <person name="Doggett J."/>
            <person name="Hall S."/>
            <person name="Kay M."/>
            <person name="Lennard N."/>
            <person name="McLay K."/>
            <person name="Mayes R."/>
            <person name="Pettett A."/>
            <person name="Rajandream M.A."/>
            <person name="Lyne M."/>
            <person name="Benes V."/>
            <person name="Rechmann S."/>
            <person name="Borkova D."/>
            <person name="Bloecker H."/>
            <person name="Scharfe M."/>
            <person name="Grimm M."/>
            <person name="Loehnert T.-H."/>
            <person name="Dose S."/>
            <person name="de Haan M."/>
            <person name="Maarse A.C."/>
            <person name="Schaefer M."/>
            <person name="Mueller-Auer S."/>
            <person name="Gabel C."/>
            <person name="Fuchs M."/>
            <person name="Fartmann B."/>
            <person name="Granderath K."/>
            <person name="Dauner D."/>
            <person name="Herzl A."/>
            <person name="Neumann S."/>
            <person name="Argiriou A."/>
            <person name="Vitale D."/>
            <person name="Liguori R."/>
            <person name="Piravandi E."/>
            <person name="Massenet O."/>
            <person name="Quigley F."/>
            <person name="Clabauld G."/>
            <person name="Muendlein A."/>
            <person name="Felber R."/>
            <person name="Schnabl S."/>
            <person name="Hiller R."/>
            <person name="Schmidt W."/>
            <person name="Lecharny A."/>
            <person name="Aubourg S."/>
            <person name="Chefdor F."/>
            <person name="Cooke R."/>
            <person name="Berger C."/>
            <person name="Monfort A."/>
            <person name="Casacuberta E."/>
            <person name="Gibbons T."/>
            <person name="Weber N."/>
            <person name="Vandenbol M."/>
            <person name="Bargues M."/>
            <person name="Terol J."/>
            <person name="Torres A."/>
            <person name="Perez-Perez A."/>
            <person name="Purnelle B."/>
            <person name="Bent E."/>
            <person name="Johnson S."/>
            <person name="Tacon D."/>
            <person name="Jesse T."/>
            <person name="Heijnen L."/>
            <person name="Schwarz S."/>
            <person name="Scholler P."/>
            <person name="Heber S."/>
            <person name="Francs P."/>
            <person name="Bielke C."/>
            <person name="Frishman D."/>
            <person name="Haase D."/>
            <person name="Lemcke K."/>
            <person name="Mewes H.-W."/>
            <person name="Stocker S."/>
            <person name="Zaccaria P."/>
            <person name="Bevan M."/>
            <person name="Wilson R.K."/>
            <person name="de la Bastide M."/>
            <person name="Habermann K."/>
            <person name="Parnell L."/>
            <person name="Dedhia N."/>
            <person name="Gnoj L."/>
            <person name="Schutz K."/>
            <person name="Huang E."/>
            <person name="Spiegel L."/>
            <person name="Sekhon M."/>
            <person name="Murray J."/>
            <person name="Sheet P."/>
            <person name="Cordes M."/>
            <person name="Abu-Threideh J."/>
            <person name="Stoneking T."/>
            <person name="Kalicki J."/>
            <person name="Graves T."/>
            <person name="Harmon G."/>
            <person name="Edwards J."/>
            <person name="Latreille P."/>
            <person name="Courtney L."/>
            <person name="Cloud J."/>
            <person name="Abbott A."/>
            <person name="Scott K."/>
            <person name="Johnson D."/>
            <person name="Minx P."/>
            <person name="Bentley D."/>
            <person name="Fulton B."/>
            <person name="Miller N."/>
            <person name="Greco T."/>
            <person name="Kemp K."/>
            <person name="Kramer J."/>
            <person name="Fulton L."/>
            <person name="Mardis E."/>
            <person name="Dante M."/>
            <person name="Pepin K."/>
            <person name="Hillier L.W."/>
            <person name="Nelson J."/>
            <person name="Spieth J."/>
            <person name="Ryan E."/>
            <person name="Andrews S."/>
            <person name="Geisel C."/>
            <person name="Layman D."/>
            <person name="Du H."/>
            <person name="Ali J."/>
            <person name="Berghoff A."/>
            <person name="Jones K."/>
            <person name="Drone K."/>
            <person name="Cotton M."/>
            <person name="Joshu C."/>
            <person name="Antonoiu B."/>
            <person name="Zidanic M."/>
            <person name="Strong C."/>
            <person name="Sun H."/>
            <person name="Lamar B."/>
            <person name="Yordan C."/>
            <person name="Ma P."/>
            <person name="Zhong J."/>
            <person name="Preston R."/>
            <person name="Vil D."/>
            <person name="Shekher M."/>
            <person name="Matero A."/>
            <person name="Shah R."/>
            <person name="Swaby I.K."/>
            <person name="O'Shaughnessy A."/>
            <person name="Rodriguez M."/>
            <person name="Hoffman J."/>
            <person name="Till S."/>
            <person name="Granat S."/>
            <person name="Shohdy N."/>
            <person name="Hasegawa A."/>
            <person name="Hameed A."/>
            <person name="Lodhi M."/>
            <person name="Johnson A."/>
            <person name="Chen E."/>
            <person name="Marra M.A."/>
            <person name="Martienssen R."/>
            <person name="McCombie W.R."/>
        </authorList>
    </citation>
    <scope>NUCLEOTIDE SEQUENCE [LARGE SCALE GENOMIC DNA]</scope>
    <source>
        <strain>cv. Columbia</strain>
    </source>
</reference>
<reference key="2">
    <citation type="journal article" date="2017" name="Plant J.">
        <title>Araport11: a complete reannotation of the Arabidopsis thaliana reference genome.</title>
        <authorList>
            <person name="Cheng C.Y."/>
            <person name="Krishnakumar V."/>
            <person name="Chan A.P."/>
            <person name="Thibaud-Nissen F."/>
            <person name="Schobel S."/>
            <person name="Town C.D."/>
        </authorList>
    </citation>
    <scope>GENOME REANNOTATION</scope>
    <source>
        <strain>cv. Columbia</strain>
    </source>
</reference>
<reference key="3">
    <citation type="journal article" date="2002" name="Science">
        <title>Functional annotation of a full-length Arabidopsis cDNA collection.</title>
        <authorList>
            <person name="Seki M."/>
            <person name="Narusaka M."/>
            <person name="Kamiya A."/>
            <person name="Ishida J."/>
            <person name="Satou M."/>
            <person name="Sakurai T."/>
            <person name="Nakajima M."/>
            <person name="Enju A."/>
            <person name="Akiyama K."/>
            <person name="Oono Y."/>
            <person name="Muramatsu M."/>
            <person name="Hayashizaki Y."/>
            <person name="Kawai J."/>
            <person name="Carninci P."/>
            <person name="Itoh M."/>
            <person name="Ishii Y."/>
            <person name="Arakawa T."/>
            <person name="Shibata K."/>
            <person name="Shinagawa A."/>
            <person name="Shinozaki K."/>
        </authorList>
    </citation>
    <scope>NUCLEOTIDE SEQUENCE [LARGE SCALE MRNA]</scope>
    <source>
        <strain>cv. Columbia</strain>
    </source>
</reference>
<gene>
    <name type="ordered locus">At4g02650</name>
    <name type="ORF">T10P11.8</name>
</gene>
<sequence>MGSSKLKRAIGAVKDQTSVGLAKVGGRSSSLTELEIAVVKATRHDDYPAEDKYIREILCLTSYSRNYVSACVATLSRRLNKTKNWSVALKTLILIQRLLTDGDRAYEQEIFFATRRGTRLLNMSDFRDASQSDSWDYSAFVRTYALYLDERLDYRMQGRRGKKKSGGGGGGDGDSGEEDDHRGTSNDIRSKAIVVKSKPVAEMKTEKIFNRVQHLQQLLDRFLACRPTGNAKNNRVVIVAMYPIVKESFQLYYNITEIMGVLIERFMELDIHDSIKVYEIFCRVSKQFDELDPFYGWCKNMAVARSSEYPELEKITQKKLDLMDEFIRDKSALAAQTTKSSSKRSNKSEEEESKTEYIQENQEDLNSIKALPAPEQKEEEEEEEKMETKKDVEEVVSRQDQEGDLLDLTDEAGVTAGTVGDSLALALFDGVVGTESASGPGWEAFNDNSADWETDLVRSATRLSGQKSELGGGFDTLLLDGMYQYGAVNAAVKTSTAYGSSGSASSVAFGSAGSPAASMLALPAPPPTANGNRNSPVMVDPFAASLEVAPPAYVQMNDMEKKQRLLMEEQIMWDQYNRSGRQGHMNFGQNQQQQYYQLPYSMGPYSYTPRY</sequence>
<name>CAP3_ARATH</name>
<accession>Q8GX47</accession>
<accession>O22762</accession>
<comment type="subcellular location">
    <subcellularLocation>
        <location evidence="1">Membrane</location>
        <location evidence="1">Clathrin-coated pit</location>
    </subcellularLocation>
    <subcellularLocation>
        <location evidence="1">Golgi apparatus</location>
    </subcellularLocation>
    <subcellularLocation>
        <location evidence="1">Cytoplasmic vesicle</location>
        <location evidence="1">Clathrin-coated vesicle</location>
    </subcellularLocation>
    <text evidence="1">Colocalized with clathrin in the Golgi area.</text>
</comment>
<comment type="sequence caution" evidence="4">
    <conflict type="erroneous gene model prediction">
        <sequence resource="EMBL-CDS" id="AAC78254"/>
    </conflict>
</comment>
<comment type="sequence caution" evidence="4">
    <conflict type="erroneous gene model prediction">
        <sequence resource="EMBL-CDS" id="CAB80758"/>
    </conflict>
</comment>
<proteinExistence type="evidence at transcript level"/>
<organism>
    <name type="scientific">Arabidopsis thaliana</name>
    <name type="common">Mouse-ear cress</name>
    <dbReference type="NCBI Taxonomy" id="3702"/>
    <lineage>
        <taxon>Eukaryota</taxon>
        <taxon>Viridiplantae</taxon>
        <taxon>Streptophyta</taxon>
        <taxon>Embryophyta</taxon>
        <taxon>Tracheophyta</taxon>
        <taxon>Spermatophyta</taxon>
        <taxon>Magnoliopsida</taxon>
        <taxon>eudicotyledons</taxon>
        <taxon>Gunneridae</taxon>
        <taxon>Pentapetalae</taxon>
        <taxon>rosids</taxon>
        <taxon>malvids</taxon>
        <taxon>Brassicales</taxon>
        <taxon>Brassicaceae</taxon>
        <taxon>Camelineae</taxon>
        <taxon>Arabidopsis</taxon>
    </lineage>
</organism>
<keyword id="KW-0168">Coated pit</keyword>
<keyword id="KW-0968">Cytoplasmic vesicle</keyword>
<keyword id="KW-0254">Endocytosis</keyword>
<keyword id="KW-0333">Golgi apparatus</keyword>
<keyword id="KW-0472">Membrane</keyword>
<keyword id="KW-1185">Reference proteome</keyword>
<dbReference type="EMBL" id="AC002330">
    <property type="protein sequence ID" value="AAC78254.1"/>
    <property type="status" value="ALT_SEQ"/>
    <property type="molecule type" value="Genomic_DNA"/>
</dbReference>
<dbReference type="EMBL" id="AL161494">
    <property type="protein sequence ID" value="CAB80758.1"/>
    <property type="status" value="ALT_SEQ"/>
    <property type="molecule type" value="Genomic_DNA"/>
</dbReference>
<dbReference type="EMBL" id="CP002687">
    <property type="protein sequence ID" value="AEE82209.1"/>
    <property type="molecule type" value="Genomic_DNA"/>
</dbReference>
<dbReference type="EMBL" id="AK118440">
    <property type="protein sequence ID" value="BAC43049.1"/>
    <property type="molecule type" value="mRNA"/>
</dbReference>
<dbReference type="PIR" id="T01084">
    <property type="entry name" value="T01084"/>
</dbReference>
<dbReference type="RefSeq" id="NP_192174.2">
    <property type="nucleotide sequence ID" value="NM_116499.3"/>
</dbReference>
<dbReference type="SMR" id="Q8GX47"/>
<dbReference type="FunCoup" id="Q8GX47">
    <property type="interactions" value="1479"/>
</dbReference>
<dbReference type="STRING" id="3702.Q8GX47"/>
<dbReference type="PaxDb" id="3702-AT4G02650.1"/>
<dbReference type="ProteomicsDB" id="240589"/>
<dbReference type="EnsemblPlants" id="AT4G02650.1">
    <property type="protein sequence ID" value="AT4G02650.1"/>
    <property type="gene ID" value="AT4G02650"/>
</dbReference>
<dbReference type="GeneID" id="828212"/>
<dbReference type="Gramene" id="AT4G02650.1">
    <property type="protein sequence ID" value="AT4G02650.1"/>
    <property type="gene ID" value="AT4G02650"/>
</dbReference>
<dbReference type="KEGG" id="ath:AT4G02650"/>
<dbReference type="Araport" id="AT4G02650"/>
<dbReference type="TAIR" id="AT4G02650">
    <property type="gene designation" value="PICALM5B"/>
</dbReference>
<dbReference type="eggNOG" id="KOG0251">
    <property type="taxonomic scope" value="Eukaryota"/>
</dbReference>
<dbReference type="HOGENOM" id="CLU_014098_3_0_1"/>
<dbReference type="InParanoid" id="Q8GX47"/>
<dbReference type="OMA" id="FMELDIH"/>
<dbReference type="PhylomeDB" id="Q8GX47"/>
<dbReference type="PRO" id="PR:Q8GX47"/>
<dbReference type="Proteomes" id="UP000006548">
    <property type="component" value="Chromosome 4"/>
</dbReference>
<dbReference type="ExpressionAtlas" id="Q8GX47">
    <property type="expression patterns" value="baseline and differential"/>
</dbReference>
<dbReference type="GO" id="GO:0005905">
    <property type="term" value="C:clathrin-coated pit"/>
    <property type="evidence" value="ECO:0007669"/>
    <property type="project" value="UniProtKB-SubCell"/>
</dbReference>
<dbReference type="GO" id="GO:0030136">
    <property type="term" value="C:clathrin-coated vesicle"/>
    <property type="evidence" value="ECO:0007669"/>
    <property type="project" value="UniProtKB-SubCell"/>
</dbReference>
<dbReference type="GO" id="GO:0005794">
    <property type="term" value="C:Golgi apparatus"/>
    <property type="evidence" value="ECO:0007669"/>
    <property type="project" value="UniProtKB-SubCell"/>
</dbReference>
<dbReference type="GO" id="GO:0090406">
    <property type="term" value="C:pollen tube"/>
    <property type="evidence" value="ECO:0000314"/>
    <property type="project" value="TAIR"/>
</dbReference>
<dbReference type="GO" id="GO:0090404">
    <property type="term" value="C:pollen tube tip"/>
    <property type="evidence" value="ECO:0000314"/>
    <property type="project" value="TAIR"/>
</dbReference>
<dbReference type="GO" id="GO:0005545">
    <property type="term" value="F:1-phosphatidylinositol binding"/>
    <property type="evidence" value="ECO:0007669"/>
    <property type="project" value="InterPro"/>
</dbReference>
<dbReference type="GO" id="GO:0030276">
    <property type="term" value="F:clathrin binding"/>
    <property type="evidence" value="ECO:0007669"/>
    <property type="project" value="InterPro"/>
</dbReference>
<dbReference type="GO" id="GO:0048268">
    <property type="term" value="P:clathrin coat assembly"/>
    <property type="evidence" value="ECO:0007669"/>
    <property type="project" value="InterPro"/>
</dbReference>
<dbReference type="GO" id="GO:0072583">
    <property type="term" value="P:clathrin-dependent endocytosis"/>
    <property type="evidence" value="ECO:0007669"/>
    <property type="project" value="InterPro"/>
</dbReference>
<dbReference type="GO" id="GO:0009860">
    <property type="term" value="P:pollen tube growth"/>
    <property type="evidence" value="ECO:0000316"/>
    <property type="project" value="TAIR"/>
</dbReference>
<dbReference type="GO" id="GO:0072659">
    <property type="term" value="P:protein localization to plasma membrane"/>
    <property type="evidence" value="ECO:0000316"/>
    <property type="project" value="TAIR"/>
</dbReference>
<dbReference type="CDD" id="cd16987">
    <property type="entry name" value="ANTH_N_AP180_plant"/>
    <property type="match status" value="1"/>
</dbReference>
<dbReference type="FunFam" id="1.25.40.90:FF:000019">
    <property type="entry name" value="Clathrin coat assembly protein"/>
    <property type="match status" value="1"/>
</dbReference>
<dbReference type="FunFam" id="1.20.58.150:FF:000005">
    <property type="entry name" value="putative clathrin assembly protein At2g25430"/>
    <property type="match status" value="1"/>
</dbReference>
<dbReference type="Gene3D" id="1.25.40.90">
    <property type="match status" value="1"/>
</dbReference>
<dbReference type="Gene3D" id="1.20.58.150">
    <property type="entry name" value="ANTH domain"/>
    <property type="match status" value="1"/>
</dbReference>
<dbReference type="InterPro" id="IPR011417">
    <property type="entry name" value="ANTH_dom"/>
</dbReference>
<dbReference type="InterPro" id="IPR014712">
    <property type="entry name" value="ANTH_dom_sf"/>
</dbReference>
<dbReference type="InterPro" id="IPR048050">
    <property type="entry name" value="ANTH_N_plant"/>
</dbReference>
<dbReference type="InterPro" id="IPR045192">
    <property type="entry name" value="AP180-like"/>
</dbReference>
<dbReference type="InterPro" id="IPR013809">
    <property type="entry name" value="ENTH"/>
</dbReference>
<dbReference type="InterPro" id="IPR008942">
    <property type="entry name" value="ENTH_VHS"/>
</dbReference>
<dbReference type="PANTHER" id="PTHR22951">
    <property type="entry name" value="CLATHRIN ASSEMBLY PROTEIN"/>
    <property type="match status" value="1"/>
</dbReference>
<dbReference type="PANTHER" id="PTHR22951:SF66">
    <property type="entry name" value="ENTH DOMAIN-CONTAINING PROTEIN"/>
    <property type="match status" value="1"/>
</dbReference>
<dbReference type="Pfam" id="PF07651">
    <property type="entry name" value="ANTH"/>
    <property type="match status" value="1"/>
</dbReference>
<dbReference type="SMART" id="SM00273">
    <property type="entry name" value="ENTH"/>
    <property type="match status" value="1"/>
</dbReference>
<dbReference type="SUPFAM" id="SSF48464">
    <property type="entry name" value="ENTH/VHS domain"/>
    <property type="match status" value="1"/>
</dbReference>
<dbReference type="SUPFAM" id="SSF89009">
    <property type="entry name" value="GAT-like domain"/>
    <property type="match status" value="1"/>
</dbReference>
<dbReference type="PROSITE" id="PS50942">
    <property type="entry name" value="ENTH"/>
    <property type="match status" value="1"/>
</dbReference>